<feature type="chain" id="PRO_1000071085" description="Aspartate--tRNA ligase">
    <location>
        <begin position="1"/>
        <end position="576"/>
    </location>
</feature>
<feature type="region of interest" description="Aspartate" evidence="1">
    <location>
        <begin position="194"/>
        <end position="197"/>
    </location>
</feature>
<feature type="binding site" evidence="1">
    <location>
        <position position="170"/>
    </location>
    <ligand>
        <name>L-aspartate</name>
        <dbReference type="ChEBI" id="CHEBI:29991"/>
    </ligand>
</feature>
<feature type="binding site" evidence="1">
    <location>
        <begin position="216"/>
        <end position="218"/>
    </location>
    <ligand>
        <name>ATP</name>
        <dbReference type="ChEBI" id="CHEBI:30616"/>
    </ligand>
</feature>
<feature type="binding site" evidence="1">
    <location>
        <position position="216"/>
    </location>
    <ligand>
        <name>L-aspartate</name>
        <dbReference type="ChEBI" id="CHEBI:29991"/>
    </ligand>
</feature>
<feature type="binding site" evidence="1">
    <location>
        <position position="225"/>
    </location>
    <ligand>
        <name>ATP</name>
        <dbReference type="ChEBI" id="CHEBI:30616"/>
    </ligand>
</feature>
<feature type="binding site" evidence="1">
    <location>
        <position position="438"/>
    </location>
    <ligand>
        <name>L-aspartate</name>
        <dbReference type="ChEBI" id="CHEBI:29991"/>
    </ligand>
</feature>
<feature type="binding site" evidence="1">
    <location>
        <position position="471"/>
    </location>
    <ligand>
        <name>ATP</name>
        <dbReference type="ChEBI" id="CHEBI:30616"/>
    </ligand>
</feature>
<feature type="binding site" evidence="1">
    <location>
        <position position="478"/>
    </location>
    <ligand>
        <name>L-aspartate</name>
        <dbReference type="ChEBI" id="CHEBI:29991"/>
    </ligand>
</feature>
<feature type="binding site" evidence="1">
    <location>
        <begin position="523"/>
        <end position="526"/>
    </location>
    <ligand>
        <name>ATP</name>
        <dbReference type="ChEBI" id="CHEBI:30616"/>
    </ligand>
</feature>
<dbReference type="EC" id="6.1.1.12" evidence="1"/>
<dbReference type="EMBL" id="CP000771">
    <property type="protein sequence ID" value="ABS61077.1"/>
    <property type="molecule type" value="Genomic_DNA"/>
</dbReference>
<dbReference type="RefSeq" id="WP_011994387.1">
    <property type="nucleotide sequence ID" value="NC_009718.1"/>
</dbReference>
<dbReference type="SMR" id="A7HME4"/>
<dbReference type="STRING" id="381764.Fnod_1230"/>
<dbReference type="KEGG" id="fno:Fnod_1230"/>
<dbReference type="eggNOG" id="COG0173">
    <property type="taxonomic scope" value="Bacteria"/>
</dbReference>
<dbReference type="HOGENOM" id="CLU_014330_3_2_0"/>
<dbReference type="OrthoDB" id="9802326at2"/>
<dbReference type="Proteomes" id="UP000002415">
    <property type="component" value="Chromosome"/>
</dbReference>
<dbReference type="GO" id="GO:0005737">
    <property type="term" value="C:cytoplasm"/>
    <property type="evidence" value="ECO:0007669"/>
    <property type="project" value="UniProtKB-SubCell"/>
</dbReference>
<dbReference type="GO" id="GO:0004815">
    <property type="term" value="F:aspartate-tRNA ligase activity"/>
    <property type="evidence" value="ECO:0007669"/>
    <property type="project" value="UniProtKB-UniRule"/>
</dbReference>
<dbReference type="GO" id="GO:0005524">
    <property type="term" value="F:ATP binding"/>
    <property type="evidence" value="ECO:0007669"/>
    <property type="project" value="UniProtKB-UniRule"/>
</dbReference>
<dbReference type="GO" id="GO:0003676">
    <property type="term" value="F:nucleic acid binding"/>
    <property type="evidence" value="ECO:0007669"/>
    <property type="project" value="InterPro"/>
</dbReference>
<dbReference type="GO" id="GO:0006422">
    <property type="term" value="P:aspartyl-tRNA aminoacylation"/>
    <property type="evidence" value="ECO:0007669"/>
    <property type="project" value="UniProtKB-UniRule"/>
</dbReference>
<dbReference type="CDD" id="cd00777">
    <property type="entry name" value="AspRS_core"/>
    <property type="match status" value="1"/>
</dbReference>
<dbReference type="CDD" id="cd04317">
    <property type="entry name" value="EcAspRS_like_N"/>
    <property type="match status" value="1"/>
</dbReference>
<dbReference type="Gene3D" id="3.30.930.10">
    <property type="entry name" value="Bira Bifunctional Protein, Domain 2"/>
    <property type="match status" value="1"/>
</dbReference>
<dbReference type="Gene3D" id="3.30.1360.30">
    <property type="entry name" value="GAD-like domain"/>
    <property type="match status" value="1"/>
</dbReference>
<dbReference type="Gene3D" id="2.40.50.140">
    <property type="entry name" value="Nucleic acid-binding proteins"/>
    <property type="match status" value="1"/>
</dbReference>
<dbReference type="HAMAP" id="MF_00044">
    <property type="entry name" value="Asp_tRNA_synth_type1"/>
    <property type="match status" value="1"/>
</dbReference>
<dbReference type="InterPro" id="IPR004364">
    <property type="entry name" value="Aa-tRNA-synt_II"/>
</dbReference>
<dbReference type="InterPro" id="IPR006195">
    <property type="entry name" value="aa-tRNA-synth_II"/>
</dbReference>
<dbReference type="InterPro" id="IPR045864">
    <property type="entry name" value="aa-tRNA-synth_II/BPL/LPL"/>
</dbReference>
<dbReference type="InterPro" id="IPR004524">
    <property type="entry name" value="Asp-tRNA-ligase_1"/>
</dbReference>
<dbReference type="InterPro" id="IPR047089">
    <property type="entry name" value="Asp-tRNA-ligase_1_N"/>
</dbReference>
<dbReference type="InterPro" id="IPR002312">
    <property type="entry name" value="Asp/Asn-tRNA-synth_IIb"/>
</dbReference>
<dbReference type="InterPro" id="IPR047090">
    <property type="entry name" value="AspRS_core"/>
</dbReference>
<dbReference type="InterPro" id="IPR004115">
    <property type="entry name" value="GAD-like_sf"/>
</dbReference>
<dbReference type="InterPro" id="IPR029351">
    <property type="entry name" value="GAD_dom"/>
</dbReference>
<dbReference type="InterPro" id="IPR012340">
    <property type="entry name" value="NA-bd_OB-fold"/>
</dbReference>
<dbReference type="InterPro" id="IPR004365">
    <property type="entry name" value="NA-bd_OB_tRNA"/>
</dbReference>
<dbReference type="NCBIfam" id="TIGR00459">
    <property type="entry name" value="aspS_bact"/>
    <property type="match status" value="1"/>
</dbReference>
<dbReference type="NCBIfam" id="NF001750">
    <property type="entry name" value="PRK00476.1"/>
    <property type="match status" value="1"/>
</dbReference>
<dbReference type="PANTHER" id="PTHR22594:SF5">
    <property type="entry name" value="ASPARTATE--TRNA LIGASE, MITOCHONDRIAL"/>
    <property type="match status" value="1"/>
</dbReference>
<dbReference type="PANTHER" id="PTHR22594">
    <property type="entry name" value="ASPARTYL/LYSYL-TRNA SYNTHETASE"/>
    <property type="match status" value="1"/>
</dbReference>
<dbReference type="Pfam" id="PF02938">
    <property type="entry name" value="GAD"/>
    <property type="match status" value="1"/>
</dbReference>
<dbReference type="Pfam" id="PF00152">
    <property type="entry name" value="tRNA-synt_2"/>
    <property type="match status" value="1"/>
</dbReference>
<dbReference type="Pfam" id="PF01336">
    <property type="entry name" value="tRNA_anti-codon"/>
    <property type="match status" value="1"/>
</dbReference>
<dbReference type="PRINTS" id="PR01042">
    <property type="entry name" value="TRNASYNTHASP"/>
</dbReference>
<dbReference type="SUPFAM" id="SSF55681">
    <property type="entry name" value="Class II aaRS and biotin synthetases"/>
    <property type="match status" value="1"/>
</dbReference>
<dbReference type="SUPFAM" id="SSF55261">
    <property type="entry name" value="GAD domain-like"/>
    <property type="match status" value="1"/>
</dbReference>
<dbReference type="SUPFAM" id="SSF50249">
    <property type="entry name" value="Nucleic acid-binding proteins"/>
    <property type="match status" value="1"/>
</dbReference>
<dbReference type="PROSITE" id="PS50862">
    <property type="entry name" value="AA_TRNA_LIGASE_II"/>
    <property type="match status" value="1"/>
</dbReference>
<organism>
    <name type="scientific">Fervidobacterium nodosum (strain ATCC 35602 / DSM 5306 / Rt17-B1)</name>
    <dbReference type="NCBI Taxonomy" id="381764"/>
    <lineage>
        <taxon>Bacteria</taxon>
        <taxon>Thermotogati</taxon>
        <taxon>Thermotogota</taxon>
        <taxon>Thermotogae</taxon>
        <taxon>Thermotogales</taxon>
        <taxon>Fervidobacteriaceae</taxon>
        <taxon>Fervidobacterium</taxon>
    </lineage>
</organism>
<keyword id="KW-0030">Aminoacyl-tRNA synthetase</keyword>
<keyword id="KW-0067">ATP-binding</keyword>
<keyword id="KW-0963">Cytoplasm</keyword>
<keyword id="KW-0436">Ligase</keyword>
<keyword id="KW-0547">Nucleotide-binding</keyword>
<keyword id="KW-0648">Protein biosynthesis</keyword>
<keyword id="KW-1185">Reference proteome</keyword>
<proteinExistence type="inferred from homology"/>
<accession>A7HME4</accession>
<gene>
    <name evidence="1" type="primary">aspS</name>
    <name type="ordered locus">Fnod_1230</name>
</gene>
<comment type="function">
    <text evidence="1">Catalyzes the attachment of L-aspartate to tRNA(Asp) in a two-step reaction: L-aspartate is first activated by ATP to form Asp-AMP and then transferred to the acceptor end of tRNA(Asp).</text>
</comment>
<comment type="catalytic activity">
    <reaction evidence="1">
        <text>tRNA(Asp) + L-aspartate + ATP = L-aspartyl-tRNA(Asp) + AMP + diphosphate</text>
        <dbReference type="Rhea" id="RHEA:19649"/>
        <dbReference type="Rhea" id="RHEA-COMP:9660"/>
        <dbReference type="Rhea" id="RHEA-COMP:9678"/>
        <dbReference type="ChEBI" id="CHEBI:29991"/>
        <dbReference type="ChEBI" id="CHEBI:30616"/>
        <dbReference type="ChEBI" id="CHEBI:33019"/>
        <dbReference type="ChEBI" id="CHEBI:78442"/>
        <dbReference type="ChEBI" id="CHEBI:78516"/>
        <dbReference type="ChEBI" id="CHEBI:456215"/>
        <dbReference type="EC" id="6.1.1.12"/>
    </reaction>
</comment>
<comment type="subunit">
    <text evidence="1">Homodimer.</text>
</comment>
<comment type="subcellular location">
    <subcellularLocation>
        <location evidence="1">Cytoplasm</location>
    </subcellularLocation>
</comment>
<comment type="similarity">
    <text evidence="1">Belongs to the class-II aminoacyl-tRNA synthetase family. Type 1 subfamily.</text>
</comment>
<reference key="1">
    <citation type="submission" date="2007-07" db="EMBL/GenBank/DDBJ databases">
        <title>Complete sequence of Fervidobacterium nodosum Rt17-B1.</title>
        <authorList>
            <consortium name="US DOE Joint Genome Institute"/>
            <person name="Copeland A."/>
            <person name="Lucas S."/>
            <person name="Lapidus A."/>
            <person name="Barry K."/>
            <person name="Glavina del Rio T."/>
            <person name="Dalin E."/>
            <person name="Tice H."/>
            <person name="Pitluck S."/>
            <person name="Saunders E."/>
            <person name="Brettin T."/>
            <person name="Bruce D."/>
            <person name="Detter J.C."/>
            <person name="Han C."/>
            <person name="Schmutz J."/>
            <person name="Larimer F."/>
            <person name="Land M."/>
            <person name="Hauser L."/>
            <person name="Kyrpides N."/>
            <person name="Mikhailova N."/>
            <person name="Nelson K."/>
            <person name="Gogarten J.P."/>
            <person name="Noll K."/>
            <person name="Richardson P."/>
        </authorList>
    </citation>
    <scope>NUCLEOTIDE SEQUENCE [LARGE SCALE GENOMIC DNA]</scope>
    <source>
        <strain>ATCC 35602 / DSM 5306 / Rt17-B1</strain>
    </source>
</reference>
<evidence type="ECO:0000255" key="1">
    <source>
        <dbReference type="HAMAP-Rule" id="MF_00044"/>
    </source>
</evidence>
<protein>
    <recommendedName>
        <fullName evidence="1">Aspartate--tRNA ligase</fullName>
        <ecNumber evidence="1">6.1.1.12</ecNumber>
    </recommendedName>
    <alternativeName>
        <fullName evidence="1">Aspartyl-tRNA synthetase</fullName>
        <shortName evidence="1">AspRS</shortName>
    </alternativeName>
</protein>
<sequence>MYRTHTCGELRGTDEGKNVILSGWIERIRDLGGVKFIVLRDRYGKTQVVVNPDSPVYPIVNNISREYVIQVEGIVRKRPAEAITPEPTGEIEIVASELKILSKSELPPFYPGDDVSEEMRLKYRYLDIRNPKMMNNLILRHKLAFATREYLSNNNFLEVETPYLTKSTPEGARDFLVPSRLKKGNFYALPQSPQLFKQILMISGIDRYFQIVRCFRDEDLRADRQPEFTQIDIEMSFVHMEDVINLAENLIRYIYKAIGIELPEKFDRITYEEAMEKYGSDKPDRRYGMEMVDLTEFFKNSDFKIIKEVLERGGSVKGFKANIPMSRKIADEYSEFVKGFGLGGVLWFKLENGQITSTTAKYLENEYKAIAEKYNMNEGEVFIIAAHDNRERMNEALGALRLKVGKQYVKVSGFDALWVVDFPFLEWSEEEGRFVARHHPFTMPYIEDLEGGVELSKVRAHAYDMVINGFEVGGGSIRIHRRDIQEKVFDIIGLTKEEAKEKFGFFLDALQYGVPPHGGIAFGLDRLAAIAAGVDNIREVIAFPKTSSGTCLLTNAPSAVTQFQLDELGIALKQSQ</sequence>
<name>SYD_FERNB</name>